<dbReference type="EMBL" id="AE000512">
    <property type="protein sequence ID" value="AAD36082.1"/>
    <property type="molecule type" value="Genomic_DNA"/>
</dbReference>
<dbReference type="PIR" id="B72307">
    <property type="entry name" value="B72307"/>
</dbReference>
<dbReference type="RefSeq" id="NP_228808.1">
    <property type="nucleotide sequence ID" value="NC_000853.1"/>
</dbReference>
<dbReference type="RefSeq" id="WP_004080552.1">
    <property type="nucleotide sequence ID" value="NZ_CP011107.1"/>
</dbReference>
<dbReference type="SMR" id="Q9X095"/>
<dbReference type="STRING" id="243274.TM_1000"/>
<dbReference type="PaxDb" id="243274-THEMA_09355"/>
<dbReference type="EnsemblBacteria" id="AAD36082">
    <property type="protein sequence ID" value="AAD36082"/>
    <property type="gene ID" value="TM_1000"/>
</dbReference>
<dbReference type="KEGG" id="tma:TM1000"/>
<dbReference type="KEGG" id="tmi:THEMA_09355"/>
<dbReference type="KEGG" id="tmm:Tmari_1004"/>
<dbReference type="KEGG" id="tmw:THMA_1022"/>
<dbReference type="eggNOG" id="COG1895">
    <property type="taxonomic scope" value="Bacteria"/>
</dbReference>
<dbReference type="InParanoid" id="Q9X095"/>
<dbReference type="OrthoDB" id="37769at2"/>
<dbReference type="Proteomes" id="UP000008183">
    <property type="component" value="Chromosome"/>
</dbReference>
<dbReference type="Gene3D" id="1.20.120.330">
    <property type="entry name" value="Nucleotidyltransferases domain 2"/>
    <property type="match status" value="1"/>
</dbReference>
<dbReference type="InterPro" id="IPR007842">
    <property type="entry name" value="HEPN_dom"/>
</dbReference>
<dbReference type="InterPro" id="IPR052226">
    <property type="entry name" value="UPF0332_toxin"/>
</dbReference>
<dbReference type="PANTHER" id="PTHR36565">
    <property type="entry name" value="UPF0332 PROTEIN TM_1000"/>
    <property type="match status" value="1"/>
</dbReference>
<dbReference type="PANTHER" id="PTHR36565:SF1">
    <property type="entry name" value="UPF0332 PROTEIN TM_1000"/>
    <property type="match status" value="1"/>
</dbReference>
<dbReference type="Pfam" id="PF05168">
    <property type="entry name" value="HEPN"/>
    <property type="match status" value="1"/>
</dbReference>
<comment type="similarity">
    <text evidence="1">Belongs to the UPF0332 family.</text>
</comment>
<evidence type="ECO:0000305" key="1"/>
<proteinExistence type="inferred from homology"/>
<feature type="chain" id="PRO_0000159642" description="UPF0332 protein TM_1000">
    <location>
        <begin position="1"/>
        <end position="132"/>
    </location>
</feature>
<organism>
    <name type="scientific">Thermotoga maritima (strain ATCC 43589 / DSM 3109 / JCM 10099 / NBRC 100826 / MSB8)</name>
    <dbReference type="NCBI Taxonomy" id="243274"/>
    <lineage>
        <taxon>Bacteria</taxon>
        <taxon>Thermotogati</taxon>
        <taxon>Thermotogota</taxon>
        <taxon>Thermotogae</taxon>
        <taxon>Thermotogales</taxon>
        <taxon>Thermotogaceae</taxon>
        <taxon>Thermotoga</taxon>
    </lineage>
</organism>
<reference key="1">
    <citation type="journal article" date="1999" name="Nature">
        <title>Evidence for lateral gene transfer between Archaea and Bacteria from genome sequence of Thermotoga maritima.</title>
        <authorList>
            <person name="Nelson K.E."/>
            <person name="Clayton R.A."/>
            <person name="Gill S.R."/>
            <person name="Gwinn M.L."/>
            <person name="Dodson R.J."/>
            <person name="Haft D.H."/>
            <person name="Hickey E.K."/>
            <person name="Peterson J.D."/>
            <person name="Nelson W.C."/>
            <person name="Ketchum K.A."/>
            <person name="McDonald L.A."/>
            <person name="Utterback T.R."/>
            <person name="Malek J.A."/>
            <person name="Linher K.D."/>
            <person name="Garrett M.M."/>
            <person name="Stewart A.M."/>
            <person name="Cotton M.D."/>
            <person name="Pratt M.S."/>
            <person name="Phillips C.A."/>
            <person name="Richardson D.L."/>
            <person name="Heidelberg J.F."/>
            <person name="Sutton G.G."/>
            <person name="Fleischmann R.D."/>
            <person name="Eisen J.A."/>
            <person name="White O."/>
            <person name="Salzberg S.L."/>
            <person name="Smith H.O."/>
            <person name="Venter J.C."/>
            <person name="Fraser C.M."/>
        </authorList>
    </citation>
    <scope>NUCLEOTIDE SEQUENCE [LARGE SCALE GENOMIC DNA]</scope>
    <source>
        <strain>ATCC 43589 / DSM 3109 / JCM 10099 / NBRC 100826 / MSB8</strain>
    </source>
</reference>
<accession>Q9X095</accession>
<keyword id="KW-1185">Reference proteome</keyword>
<name>YA00_THEMA</name>
<gene>
    <name type="ordered locus">TM_1000</name>
</gene>
<protein>
    <recommendedName>
        <fullName>UPF0332 protein TM_1000</fullName>
    </recommendedName>
</protein>
<sequence length="132" mass="15650">MNEKEKIIEYWRRRARECLDDAKLLLKNERLHSAVNRIYYALFYQVSALLLAKGLSFSKHSGVLAAFNREFVKTGKVNKELGKFYNRMFEHRKTGDYGELVEFEEENVKDWIRKAEGFLDAIEKLIEDLKRA</sequence>